<comment type="catalytic activity">
    <reaction evidence="1">
        <text>(6R)-10-formyltetrahydrofolate + 5-amino-1-(5-phospho-beta-D-ribosyl)imidazole-4-carboxamide = 5-formamido-1-(5-phospho-D-ribosyl)imidazole-4-carboxamide + (6S)-5,6,7,8-tetrahydrofolate</text>
        <dbReference type="Rhea" id="RHEA:22192"/>
        <dbReference type="ChEBI" id="CHEBI:57453"/>
        <dbReference type="ChEBI" id="CHEBI:58467"/>
        <dbReference type="ChEBI" id="CHEBI:58475"/>
        <dbReference type="ChEBI" id="CHEBI:195366"/>
        <dbReference type="EC" id="2.1.2.3"/>
    </reaction>
</comment>
<comment type="catalytic activity">
    <reaction evidence="1">
        <text>IMP + H2O = 5-formamido-1-(5-phospho-D-ribosyl)imidazole-4-carboxamide</text>
        <dbReference type="Rhea" id="RHEA:18445"/>
        <dbReference type="ChEBI" id="CHEBI:15377"/>
        <dbReference type="ChEBI" id="CHEBI:58053"/>
        <dbReference type="ChEBI" id="CHEBI:58467"/>
        <dbReference type="EC" id="3.5.4.10"/>
    </reaction>
</comment>
<comment type="pathway">
    <text evidence="1">Purine metabolism; IMP biosynthesis via de novo pathway; 5-formamido-1-(5-phospho-D-ribosyl)imidazole-4-carboxamide from 5-amino-1-(5-phospho-D-ribosyl)imidazole-4-carboxamide (10-formyl THF route): step 1/1.</text>
</comment>
<comment type="pathway">
    <text evidence="1">Purine metabolism; IMP biosynthesis via de novo pathway; IMP from 5-formamido-1-(5-phospho-D-ribosyl)imidazole-4-carboxamide: step 1/1.</text>
</comment>
<comment type="domain">
    <text evidence="1">The IMP cyclohydrolase activity resides in the N-terminal region.</text>
</comment>
<comment type="similarity">
    <text evidence="1">Belongs to the PurH family.</text>
</comment>
<keyword id="KW-0378">Hydrolase</keyword>
<keyword id="KW-0511">Multifunctional enzyme</keyword>
<keyword id="KW-0658">Purine biosynthesis</keyword>
<keyword id="KW-0808">Transferase</keyword>
<accession>B2SRB2</accession>
<organism>
    <name type="scientific">Xanthomonas oryzae pv. oryzae (strain PXO99A)</name>
    <dbReference type="NCBI Taxonomy" id="360094"/>
    <lineage>
        <taxon>Bacteria</taxon>
        <taxon>Pseudomonadati</taxon>
        <taxon>Pseudomonadota</taxon>
        <taxon>Gammaproteobacteria</taxon>
        <taxon>Lysobacterales</taxon>
        <taxon>Lysobacteraceae</taxon>
        <taxon>Xanthomonas</taxon>
    </lineage>
</organism>
<evidence type="ECO:0000255" key="1">
    <source>
        <dbReference type="HAMAP-Rule" id="MF_00139"/>
    </source>
</evidence>
<evidence type="ECO:0000255" key="2">
    <source>
        <dbReference type="PROSITE-ProRule" id="PRU01202"/>
    </source>
</evidence>
<dbReference type="EC" id="2.1.2.3" evidence="1"/>
<dbReference type="EC" id="3.5.4.10" evidence="1"/>
<dbReference type="EMBL" id="CP000967">
    <property type="protein sequence ID" value="ACD61252.1"/>
    <property type="molecule type" value="Genomic_DNA"/>
</dbReference>
<dbReference type="RefSeq" id="WP_012446234.1">
    <property type="nucleotide sequence ID" value="NC_010717.2"/>
</dbReference>
<dbReference type="SMR" id="B2SRB2"/>
<dbReference type="KEGG" id="xop:PXO_02965"/>
<dbReference type="eggNOG" id="COG0138">
    <property type="taxonomic scope" value="Bacteria"/>
</dbReference>
<dbReference type="HOGENOM" id="CLU_016316_5_2_6"/>
<dbReference type="UniPathway" id="UPA00074">
    <property type="reaction ID" value="UER00133"/>
</dbReference>
<dbReference type="UniPathway" id="UPA00074">
    <property type="reaction ID" value="UER00135"/>
</dbReference>
<dbReference type="Proteomes" id="UP000001740">
    <property type="component" value="Chromosome"/>
</dbReference>
<dbReference type="GO" id="GO:0005829">
    <property type="term" value="C:cytosol"/>
    <property type="evidence" value="ECO:0007669"/>
    <property type="project" value="TreeGrafter"/>
</dbReference>
<dbReference type="GO" id="GO:0003937">
    <property type="term" value="F:IMP cyclohydrolase activity"/>
    <property type="evidence" value="ECO:0007669"/>
    <property type="project" value="UniProtKB-UniRule"/>
</dbReference>
<dbReference type="GO" id="GO:0004643">
    <property type="term" value="F:phosphoribosylaminoimidazolecarboxamide formyltransferase activity"/>
    <property type="evidence" value="ECO:0007669"/>
    <property type="project" value="UniProtKB-UniRule"/>
</dbReference>
<dbReference type="GO" id="GO:0006189">
    <property type="term" value="P:'de novo' IMP biosynthetic process"/>
    <property type="evidence" value="ECO:0007669"/>
    <property type="project" value="UniProtKB-UniRule"/>
</dbReference>
<dbReference type="CDD" id="cd01421">
    <property type="entry name" value="IMPCH"/>
    <property type="match status" value="1"/>
</dbReference>
<dbReference type="FunFam" id="3.40.140.20:FF:000001">
    <property type="entry name" value="Bifunctional purine biosynthesis protein PurH"/>
    <property type="match status" value="1"/>
</dbReference>
<dbReference type="FunFam" id="3.40.140.20:FF:000002">
    <property type="entry name" value="Bifunctional purine biosynthesis protein PurH"/>
    <property type="match status" value="1"/>
</dbReference>
<dbReference type="FunFam" id="3.40.50.1380:FF:000001">
    <property type="entry name" value="Bifunctional purine biosynthesis protein PurH"/>
    <property type="match status" value="1"/>
</dbReference>
<dbReference type="Gene3D" id="3.40.140.20">
    <property type="match status" value="2"/>
</dbReference>
<dbReference type="Gene3D" id="3.40.50.1380">
    <property type="entry name" value="Methylglyoxal synthase-like domain"/>
    <property type="match status" value="1"/>
</dbReference>
<dbReference type="HAMAP" id="MF_00139">
    <property type="entry name" value="PurH"/>
    <property type="match status" value="1"/>
</dbReference>
<dbReference type="InterPro" id="IPR024051">
    <property type="entry name" value="AICAR_Tfase_dup_dom_sf"/>
</dbReference>
<dbReference type="InterPro" id="IPR016193">
    <property type="entry name" value="Cytidine_deaminase-like"/>
</dbReference>
<dbReference type="InterPro" id="IPR011607">
    <property type="entry name" value="MGS-like_dom"/>
</dbReference>
<dbReference type="InterPro" id="IPR036914">
    <property type="entry name" value="MGS-like_dom_sf"/>
</dbReference>
<dbReference type="InterPro" id="IPR002695">
    <property type="entry name" value="PurH-like"/>
</dbReference>
<dbReference type="NCBIfam" id="NF002049">
    <property type="entry name" value="PRK00881.1"/>
    <property type="match status" value="1"/>
</dbReference>
<dbReference type="NCBIfam" id="TIGR00355">
    <property type="entry name" value="purH"/>
    <property type="match status" value="1"/>
</dbReference>
<dbReference type="PANTHER" id="PTHR11692:SF0">
    <property type="entry name" value="BIFUNCTIONAL PURINE BIOSYNTHESIS PROTEIN ATIC"/>
    <property type="match status" value="1"/>
</dbReference>
<dbReference type="PANTHER" id="PTHR11692">
    <property type="entry name" value="BIFUNCTIONAL PURINE BIOSYNTHESIS PROTEIN PURH"/>
    <property type="match status" value="1"/>
</dbReference>
<dbReference type="Pfam" id="PF01808">
    <property type="entry name" value="AICARFT_IMPCHas"/>
    <property type="match status" value="1"/>
</dbReference>
<dbReference type="Pfam" id="PF02142">
    <property type="entry name" value="MGS"/>
    <property type="match status" value="1"/>
</dbReference>
<dbReference type="PIRSF" id="PIRSF000414">
    <property type="entry name" value="AICARFT_IMPCHas"/>
    <property type="match status" value="1"/>
</dbReference>
<dbReference type="SMART" id="SM00798">
    <property type="entry name" value="AICARFT_IMPCHas"/>
    <property type="match status" value="1"/>
</dbReference>
<dbReference type="SMART" id="SM00851">
    <property type="entry name" value="MGS"/>
    <property type="match status" value="1"/>
</dbReference>
<dbReference type="SUPFAM" id="SSF53927">
    <property type="entry name" value="Cytidine deaminase-like"/>
    <property type="match status" value="1"/>
</dbReference>
<dbReference type="SUPFAM" id="SSF52335">
    <property type="entry name" value="Methylglyoxal synthase-like"/>
    <property type="match status" value="1"/>
</dbReference>
<dbReference type="PROSITE" id="PS51855">
    <property type="entry name" value="MGS"/>
    <property type="match status" value="1"/>
</dbReference>
<proteinExistence type="inferred from homology"/>
<sequence length="527" mass="55733">MASDFLPVRRALLSVSDKTGLIDLARALVARNVELLSTGGTAKAIREAGLPVKDVAELTGFPEMMDGRVKTLHPLVHGGLLGRAGIDEAVMAEHGIAPIDLLVLNLYPFESVTVKTDCTLADAVENIDIGGPAMLRSAAKNFARVAVATDPAQYADLLAELEANNGQLSAAKRFALSVAAFNRVAQYDAAISNYLSAVADSAETVPTRNPFPAQINSNFVKVMDLRYGENPHQSGAFYRDLYPVPGTLATFQQLQGKELSYNNLADADAAWECVRQFDAPACVIVKHANPCGVAVGAGCGDAYELAYATDPTSAFGGILAFNKTLDAATAKAILDRQFVEVLIAPDYDAGALEYATKKANVRVLKIPHGNGLNNYDTKRIGSGLLMQSADNRGMSLGELSVVTQRAPSEAELGDLLFAWRVAKYVKSNAIVYAKDSRTIGVGAGQMSRVVSAKIAALKAEEAKLTVAGSVMASDAFFPFRDGIDAAASAGIQAVIQPGGSMRDGEVIAAADEHGIAMVFTGVRHFRH</sequence>
<name>PUR9_XANOP</name>
<reference key="1">
    <citation type="journal article" date="2008" name="BMC Genomics">
        <title>Genome sequence and rapid evolution of the rice pathogen Xanthomonas oryzae pv. oryzae PXO99A.</title>
        <authorList>
            <person name="Salzberg S.L."/>
            <person name="Sommer D.D."/>
            <person name="Schatz M.C."/>
            <person name="Phillippy A.M."/>
            <person name="Rabinowicz P.D."/>
            <person name="Tsuge S."/>
            <person name="Furutani A."/>
            <person name="Ochiai H."/>
            <person name="Delcher A.L."/>
            <person name="Kelley D."/>
            <person name="Madupu R."/>
            <person name="Puiu D."/>
            <person name="Radune D."/>
            <person name="Shumway M."/>
            <person name="Trapnell C."/>
            <person name="Aparna G."/>
            <person name="Jha G."/>
            <person name="Pandey A."/>
            <person name="Patil P.B."/>
            <person name="Ishihara H."/>
            <person name="Meyer D.F."/>
            <person name="Szurek B."/>
            <person name="Verdier V."/>
            <person name="Koebnik R."/>
            <person name="Dow J.M."/>
            <person name="Ryan R.P."/>
            <person name="Hirata H."/>
            <person name="Tsuyumu S."/>
            <person name="Won Lee S."/>
            <person name="Seo Y.-S."/>
            <person name="Sriariyanum M."/>
            <person name="Ronald P.C."/>
            <person name="Sonti R.V."/>
            <person name="Van Sluys M.-A."/>
            <person name="Leach J.E."/>
            <person name="White F.F."/>
            <person name="Bogdanove A.J."/>
        </authorList>
    </citation>
    <scope>NUCLEOTIDE SEQUENCE [LARGE SCALE GENOMIC DNA]</scope>
    <source>
        <strain>PXO99A</strain>
    </source>
</reference>
<protein>
    <recommendedName>
        <fullName evidence="1">Bifunctional purine biosynthesis protein PurH</fullName>
    </recommendedName>
    <domain>
        <recommendedName>
            <fullName evidence="1">Phosphoribosylaminoimidazolecarboxamide formyltransferase</fullName>
            <ecNumber evidence="1">2.1.2.3</ecNumber>
        </recommendedName>
        <alternativeName>
            <fullName evidence="1">AICAR transformylase</fullName>
        </alternativeName>
    </domain>
    <domain>
        <recommendedName>
            <fullName evidence="1">IMP cyclohydrolase</fullName>
            <ecNumber evidence="1">3.5.4.10</ecNumber>
        </recommendedName>
        <alternativeName>
            <fullName evidence="1">ATIC</fullName>
        </alternativeName>
        <alternativeName>
            <fullName evidence="1">IMP synthase</fullName>
        </alternativeName>
        <alternativeName>
            <fullName evidence="1">Inosinicase</fullName>
        </alternativeName>
    </domain>
</protein>
<gene>
    <name evidence="1" type="primary">purH</name>
    <name type="ordered locus">PXO_02965</name>
</gene>
<feature type="chain" id="PRO_1000096108" description="Bifunctional purine biosynthesis protein PurH">
    <location>
        <begin position="1"/>
        <end position="527"/>
    </location>
</feature>
<feature type="domain" description="MGS-like" evidence="2">
    <location>
        <begin position="1"/>
        <end position="149"/>
    </location>
</feature>